<name>RS9_CHLFF</name>
<evidence type="ECO:0000255" key="1">
    <source>
        <dbReference type="HAMAP-Rule" id="MF_00532"/>
    </source>
</evidence>
<evidence type="ECO:0000256" key="2">
    <source>
        <dbReference type="SAM" id="MobiDB-lite"/>
    </source>
</evidence>
<evidence type="ECO:0000305" key="3"/>
<keyword id="KW-0687">Ribonucleoprotein</keyword>
<keyword id="KW-0689">Ribosomal protein</keyword>
<comment type="similarity">
    <text evidence="1">Belongs to the universal ribosomal protein uS9 family.</text>
</comment>
<accession>Q254P0</accession>
<reference key="1">
    <citation type="journal article" date="2006" name="DNA Res.">
        <title>Genome sequence of the cat pathogen, Chlamydophila felis.</title>
        <authorList>
            <person name="Azuma Y."/>
            <person name="Hirakawa H."/>
            <person name="Yamashita A."/>
            <person name="Cai Y."/>
            <person name="Rahman M.A."/>
            <person name="Suzuki H."/>
            <person name="Mitaku S."/>
            <person name="Toh H."/>
            <person name="Goto S."/>
            <person name="Murakami T."/>
            <person name="Sugi K."/>
            <person name="Hayashi H."/>
            <person name="Fukushi H."/>
            <person name="Hattori M."/>
            <person name="Kuhara S."/>
            <person name="Shirai M."/>
        </authorList>
    </citation>
    <scope>NUCLEOTIDE SEQUENCE [LARGE SCALE GENOMIC DNA]</scope>
    <source>
        <strain>Fe/C-56</strain>
    </source>
</reference>
<feature type="chain" id="PRO_1000051200" description="Small ribosomal subunit protein uS9">
    <location>
        <begin position="1"/>
        <end position="133"/>
    </location>
</feature>
<feature type="region of interest" description="Disordered" evidence="2">
    <location>
        <begin position="95"/>
        <end position="133"/>
    </location>
</feature>
<feature type="compositionally biased region" description="Basic and acidic residues" evidence="2">
    <location>
        <begin position="95"/>
        <end position="113"/>
    </location>
</feature>
<feature type="compositionally biased region" description="Basic residues" evidence="2">
    <location>
        <begin position="114"/>
        <end position="133"/>
    </location>
</feature>
<organism>
    <name type="scientific">Chlamydia felis (strain Fe/C-56)</name>
    <name type="common">Chlamydophila felis</name>
    <dbReference type="NCBI Taxonomy" id="264202"/>
    <lineage>
        <taxon>Bacteria</taxon>
        <taxon>Pseudomonadati</taxon>
        <taxon>Chlamydiota</taxon>
        <taxon>Chlamydiia</taxon>
        <taxon>Chlamydiales</taxon>
        <taxon>Chlamydiaceae</taxon>
        <taxon>Chlamydia/Chlamydophila group</taxon>
        <taxon>Chlamydia</taxon>
    </lineage>
</organism>
<gene>
    <name evidence="1" type="primary">rpsI</name>
    <name type="ordered locus">CF0476</name>
</gene>
<proteinExistence type="inferred from homology"/>
<dbReference type="EMBL" id="AP006861">
    <property type="protein sequence ID" value="BAE81248.1"/>
    <property type="molecule type" value="Genomic_DNA"/>
</dbReference>
<dbReference type="RefSeq" id="WP_011458028.1">
    <property type="nucleotide sequence ID" value="NC_007899.1"/>
</dbReference>
<dbReference type="SMR" id="Q254P0"/>
<dbReference type="STRING" id="264202.CF0476"/>
<dbReference type="KEGG" id="cfe:CF0476"/>
<dbReference type="eggNOG" id="COG0103">
    <property type="taxonomic scope" value="Bacteria"/>
</dbReference>
<dbReference type="HOGENOM" id="CLU_046483_2_1_0"/>
<dbReference type="OrthoDB" id="9803965at2"/>
<dbReference type="Proteomes" id="UP000001260">
    <property type="component" value="Chromosome"/>
</dbReference>
<dbReference type="GO" id="GO:0022627">
    <property type="term" value="C:cytosolic small ribosomal subunit"/>
    <property type="evidence" value="ECO:0007669"/>
    <property type="project" value="TreeGrafter"/>
</dbReference>
<dbReference type="GO" id="GO:0003723">
    <property type="term" value="F:RNA binding"/>
    <property type="evidence" value="ECO:0007669"/>
    <property type="project" value="TreeGrafter"/>
</dbReference>
<dbReference type="GO" id="GO:0003735">
    <property type="term" value="F:structural constituent of ribosome"/>
    <property type="evidence" value="ECO:0007669"/>
    <property type="project" value="InterPro"/>
</dbReference>
<dbReference type="GO" id="GO:0006412">
    <property type="term" value="P:translation"/>
    <property type="evidence" value="ECO:0007669"/>
    <property type="project" value="UniProtKB-UniRule"/>
</dbReference>
<dbReference type="FunFam" id="3.30.230.10:FF:000001">
    <property type="entry name" value="30S ribosomal protein S9"/>
    <property type="match status" value="1"/>
</dbReference>
<dbReference type="Gene3D" id="3.30.230.10">
    <property type="match status" value="1"/>
</dbReference>
<dbReference type="HAMAP" id="MF_00532_B">
    <property type="entry name" value="Ribosomal_uS9_B"/>
    <property type="match status" value="1"/>
</dbReference>
<dbReference type="InterPro" id="IPR020568">
    <property type="entry name" value="Ribosomal_Su5_D2-typ_SF"/>
</dbReference>
<dbReference type="InterPro" id="IPR000754">
    <property type="entry name" value="Ribosomal_uS9"/>
</dbReference>
<dbReference type="InterPro" id="IPR023035">
    <property type="entry name" value="Ribosomal_uS9_bac/plastid"/>
</dbReference>
<dbReference type="InterPro" id="IPR020574">
    <property type="entry name" value="Ribosomal_uS9_CS"/>
</dbReference>
<dbReference type="InterPro" id="IPR014721">
    <property type="entry name" value="Ribsml_uS5_D2-typ_fold_subgr"/>
</dbReference>
<dbReference type="NCBIfam" id="NF001099">
    <property type="entry name" value="PRK00132.1"/>
    <property type="match status" value="1"/>
</dbReference>
<dbReference type="PANTHER" id="PTHR21569">
    <property type="entry name" value="RIBOSOMAL PROTEIN S9"/>
    <property type="match status" value="1"/>
</dbReference>
<dbReference type="PANTHER" id="PTHR21569:SF1">
    <property type="entry name" value="SMALL RIBOSOMAL SUBUNIT PROTEIN US9M"/>
    <property type="match status" value="1"/>
</dbReference>
<dbReference type="Pfam" id="PF00380">
    <property type="entry name" value="Ribosomal_S9"/>
    <property type="match status" value="1"/>
</dbReference>
<dbReference type="SUPFAM" id="SSF54211">
    <property type="entry name" value="Ribosomal protein S5 domain 2-like"/>
    <property type="match status" value="1"/>
</dbReference>
<dbReference type="PROSITE" id="PS00360">
    <property type="entry name" value="RIBOSOMAL_S9"/>
    <property type="match status" value="1"/>
</dbReference>
<sequence length="133" mass="14978">MVKSTIEESVATGRRKQAVSSVRLRPGTGKIDVNGKAFDEYFPLEIQRATILSPLKVLGHTEEFDLIIRINGGGIQGQVIATRLGLARALLKKNGDSKQELKSRGFLTRDPRKKERKKYGHKKARKSFQFSKR</sequence>
<protein>
    <recommendedName>
        <fullName evidence="1">Small ribosomal subunit protein uS9</fullName>
    </recommendedName>
    <alternativeName>
        <fullName evidence="3">30S ribosomal protein S9</fullName>
    </alternativeName>
</protein>